<protein>
    <recommendedName>
        <fullName evidence="10">Piwi protein</fullName>
    </recommendedName>
    <alternativeName>
        <fullName evidence="10">AfAgo</fullName>
    </alternativeName>
    <alternativeName>
        <fullName evidence="8">AfPiwi</fullName>
    </alternativeName>
    <alternativeName>
        <fullName evidence="9">PIWI/MID domain protein</fullName>
    </alternativeName>
    <alternativeName>
        <fullName evidence="10">Short prokaryotic argonaute</fullName>
    </alternativeName>
</protein>
<evidence type="ECO:0000250" key="1">
    <source>
        <dbReference type="UniProtKB" id="Q58717"/>
    </source>
</evidence>
<evidence type="ECO:0000255" key="2">
    <source>
        <dbReference type="PROSITE-ProRule" id="PRU00150"/>
    </source>
</evidence>
<evidence type="ECO:0000269" key="3">
    <source>
    </source>
</evidence>
<evidence type="ECO:0000269" key="4">
    <source>
    </source>
</evidence>
<evidence type="ECO:0000269" key="5">
    <source>
    </source>
</evidence>
<evidence type="ECO:0000269" key="6">
    <source>
    </source>
</evidence>
<evidence type="ECO:0000269" key="7">
    <source>
    </source>
</evidence>
<evidence type="ECO:0000303" key="8">
    <source>
    </source>
</evidence>
<evidence type="ECO:0000303" key="9">
    <source>
    </source>
</evidence>
<evidence type="ECO:0000303" key="10">
    <source>
    </source>
</evidence>
<evidence type="ECO:0000305" key="11"/>
<evidence type="ECO:0000305" key="12">
    <source>
    </source>
</evidence>
<evidence type="ECO:0000305" key="13">
    <source>
    </source>
</evidence>
<evidence type="ECO:0007744" key="14">
    <source>
        <dbReference type="PDB" id="1W9H"/>
    </source>
</evidence>
<evidence type="ECO:0007744" key="15">
    <source>
        <dbReference type="PDB" id="1YTU"/>
    </source>
</evidence>
<evidence type="ECO:0007744" key="16">
    <source>
        <dbReference type="PDB" id="2BGG"/>
    </source>
</evidence>
<evidence type="ECO:0007744" key="17">
    <source>
        <dbReference type="PDB" id="2W42"/>
    </source>
</evidence>
<evidence type="ECO:0007744" key="18">
    <source>
        <dbReference type="PDB" id="6T5T"/>
    </source>
</evidence>
<evidence type="ECO:0007744" key="19">
    <source>
        <dbReference type="PDB" id="6TUO"/>
    </source>
</evidence>
<evidence type="ECO:0007744" key="20">
    <source>
        <dbReference type="PDB" id="6XU0"/>
    </source>
</evidence>
<evidence type="ECO:0007744" key="21">
    <source>
        <dbReference type="PDB" id="6XUP"/>
    </source>
</evidence>
<evidence type="ECO:0007829" key="22">
    <source>
        <dbReference type="PDB" id="1W9H"/>
    </source>
</evidence>
<evidence type="ECO:0007829" key="23">
    <source>
        <dbReference type="PDB" id="1YTU"/>
    </source>
</evidence>
<evidence type="ECO:0007829" key="24">
    <source>
        <dbReference type="PDB" id="2BGG"/>
    </source>
</evidence>
<evidence type="ECO:0007829" key="25">
    <source>
        <dbReference type="PDB" id="2W42"/>
    </source>
</evidence>
<evidence type="ECO:0007829" key="26">
    <source>
        <dbReference type="PDB" id="6T5T"/>
    </source>
</evidence>
<evidence type="ECO:0007829" key="27">
    <source>
        <dbReference type="PDB" id="6TUO"/>
    </source>
</evidence>
<evidence type="ECO:0007829" key="28">
    <source>
        <dbReference type="PDB" id="8PVV"/>
    </source>
</evidence>
<evidence type="ECO:0007829" key="29">
    <source>
        <dbReference type="PDB" id="8QG0"/>
    </source>
</evidence>
<accession>O28951</accession>
<proteinExistence type="evidence at protein level"/>
<keyword id="KW-0002">3D-structure</keyword>
<keyword id="KW-0238">DNA-binding</keyword>
<keyword id="KW-0479">Metal-binding</keyword>
<keyword id="KW-1185">Reference proteome</keyword>
<keyword id="KW-0694">RNA-binding</keyword>
<gene>
    <name type="ordered locus">AF_1318</name>
</gene>
<dbReference type="EMBL" id="AE000782">
    <property type="protein sequence ID" value="AAB89939.1"/>
    <property type="molecule type" value="Genomic_DNA"/>
</dbReference>
<dbReference type="PIR" id="E69414">
    <property type="entry name" value="E69414"/>
</dbReference>
<dbReference type="PDB" id="1W9H">
    <property type="method" value="X-ray"/>
    <property type="resolution" value="1.95 A"/>
    <property type="chains" value="A=1-427"/>
</dbReference>
<dbReference type="PDB" id="1YTU">
    <property type="method" value="X-ray"/>
    <property type="resolution" value="2.50 A"/>
    <property type="chains" value="A/B=1-427"/>
</dbReference>
<dbReference type="PDB" id="2BGG">
    <property type="method" value="X-ray"/>
    <property type="resolution" value="2.20 A"/>
    <property type="chains" value="A/B=1-427"/>
</dbReference>
<dbReference type="PDB" id="2W42">
    <property type="method" value="X-ray"/>
    <property type="resolution" value="1.90 A"/>
    <property type="chains" value="A/B=1-427"/>
</dbReference>
<dbReference type="PDB" id="6T5T">
    <property type="method" value="X-ray"/>
    <property type="resolution" value="1.70 A"/>
    <property type="chains" value="A=1-427"/>
</dbReference>
<dbReference type="PDB" id="6TUO">
    <property type="method" value="X-ray"/>
    <property type="resolution" value="1.80 A"/>
    <property type="chains" value="A=1-427"/>
</dbReference>
<dbReference type="PDB" id="6XU0">
    <property type="method" value="X-ray"/>
    <property type="resolution" value="1.90 A"/>
    <property type="chains" value="A/B=1-427"/>
</dbReference>
<dbReference type="PDB" id="6XUP">
    <property type="method" value="X-ray"/>
    <property type="resolution" value="1.90 A"/>
    <property type="chains" value="A/B=1-427"/>
</dbReference>
<dbReference type="PDB" id="8OK9">
    <property type="method" value="X-ray"/>
    <property type="resolution" value="2.50 A"/>
    <property type="chains" value="A=1-427"/>
</dbReference>
<dbReference type="PDB" id="8PVV">
    <property type="method" value="EM"/>
    <property type="resolution" value="2.81 A"/>
    <property type="chains" value="A=1-427"/>
</dbReference>
<dbReference type="PDB" id="8QG0">
    <property type="method" value="EM"/>
    <property type="resolution" value="3.43 A"/>
    <property type="chains" value="A=1-427"/>
</dbReference>
<dbReference type="PDBsum" id="1W9H"/>
<dbReference type="PDBsum" id="1YTU"/>
<dbReference type="PDBsum" id="2BGG"/>
<dbReference type="PDBsum" id="2W42"/>
<dbReference type="PDBsum" id="6T5T"/>
<dbReference type="PDBsum" id="6TUO"/>
<dbReference type="PDBsum" id="6XU0"/>
<dbReference type="PDBsum" id="6XUP"/>
<dbReference type="PDBsum" id="8OK9"/>
<dbReference type="PDBsum" id="8PVV"/>
<dbReference type="PDBsum" id="8QG0"/>
<dbReference type="SASBDB" id="O28951"/>
<dbReference type="SMR" id="O28951"/>
<dbReference type="IntAct" id="O28951">
    <property type="interactions" value="1"/>
</dbReference>
<dbReference type="STRING" id="224325.AF_1318"/>
<dbReference type="PaxDb" id="224325-AF_1318"/>
<dbReference type="EnsemblBacteria" id="AAB89939">
    <property type="protein sequence ID" value="AAB89939"/>
    <property type="gene ID" value="AF_1318"/>
</dbReference>
<dbReference type="KEGG" id="afu:AF_1318"/>
<dbReference type="eggNOG" id="arCOG03890">
    <property type="taxonomic scope" value="Archaea"/>
</dbReference>
<dbReference type="HOGENOM" id="CLU_643412_0_0_2"/>
<dbReference type="EvolutionaryTrace" id="O28951"/>
<dbReference type="Proteomes" id="UP000002199">
    <property type="component" value="Chromosome"/>
</dbReference>
<dbReference type="GO" id="GO:0003677">
    <property type="term" value="F:DNA binding"/>
    <property type="evidence" value="ECO:0007669"/>
    <property type="project" value="UniProtKB-KW"/>
</dbReference>
<dbReference type="GO" id="GO:0046872">
    <property type="term" value="F:metal ion binding"/>
    <property type="evidence" value="ECO:0007669"/>
    <property type="project" value="UniProtKB-KW"/>
</dbReference>
<dbReference type="GO" id="GO:0003723">
    <property type="term" value="F:RNA binding"/>
    <property type="evidence" value="ECO:0007669"/>
    <property type="project" value="UniProtKB-KW"/>
</dbReference>
<dbReference type="CDD" id="cd02826">
    <property type="entry name" value="Piwi-like"/>
    <property type="match status" value="1"/>
</dbReference>
<dbReference type="Gene3D" id="3.40.50.2300">
    <property type="match status" value="1"/>
</dbReference>
<dbReference type="Gene3D" id="3.30.420.10">
    <property type="entry name" value="Ribonuclease H-like superfamily/Ribonuclease H"/>
    <property type="match status" value="1"/>
</dbReference>
<dbReference type="InterPro" id="IPR003165">
    <property type="entry name" value="Piwi"/>
</dbReference>
<dbReference type="InterPro" id="IPR012337">
    <property type="entry name" value="RNaseH-like_sf"/>
</dbReference>
<dbReference type="InterPro" id="IPR036397">
    <property type="entry name" value="RNaseH_sf"/>
</dbReference>
<dbReference type="Pfam" id="PF02171">
    <property type="entry name" value="Piwi"/>
    <property type="match status" value="1"/>
</dbReference>
<dbReference type="SMART" id="SM00950">
    <property type="entry name" value="Piwi"/>
    <property type="match status" value="1"/>
</dbReference>
<dbReference type="SUPFAM" id="SSF53098">
    <property type="entry name" value="Ribonuclease H-like"/>
    <property type="match status" value="1"/>
</dbReference>
<dbReference type="PROSITE" id="PS50822">
    <property type="entry name" value="PIWI"/>
    <property type="match status" value="1"/>
</dbReference>
<feature type="chain" id="PRO_0000378146" description="Piwi protein">
    <location>
        <begin position="1"/>
        <end position="427"/>
    </location>
</feature>
<feature type="domain" description="Piwi" evidence="2">
    <location>
        <begin position="110"/>
        <end position="406"/>
    </location>
</feature>
<feature type="region of interest" description="Mid domain" evidence="12 13">
    <location>
        <begin position="38"/>
        <end position="167"/>
    </location>
</feature>
<feature type="region of interest" description="Binds 5'-phosphorylated end of guide DNA" evidence="6 17">
    <location>
        <begin position="118"/>
        <end position="124"/>
    </location>
</feature>
<feature type="region of interest" description="Binds target DNA" evidence="6 17">
    <location>
        <begin position="147"/>
        <end position="148"/>
    </location>
</feature>
<feature type="region of interest" description="Binds guide DNA" evidence="6 17">
    <location>
        <begin position="150"/>
        <end position="155"/>
    </location>
</feature>
<feature type="region of interest" description="PIWI domain" evidence="12 13">
    <location>
        <begin position="168"/>
        <end position="427"/>
    </location>
</feature>
<feature type="binding site" evidence="15 16 17">
    <location>
        <position position="159"/>
    </location>
    <ligand>
        <name>a divalent metal cation</name>
        <dbReference type="ChEBI" id="CHEBI:60240"/>
    </ligand>
</feature>
<feature type="binding site" evidence="15 16 17">
    <location>
        <position position="427"/>
    </location>
    <ligand>
        <name>a divalent metal cation</name>
        <dbReference type="ChEBI" id="CHEBI:60240"/>
    </ligand>
</feature>
<feature type="mutagenesis site" description="Reduced binding affinity for siRNA." evidence="5">
    <original>Y</original>
    <variation>A</variation>
    <location>
        <position position="123"/>
    </location>
</feature>
<feature type="mutagenesis site" description="Reduced binding affinity for siRNA." evidence="5">
    <original>K</original>
    <variation>A</variation>
    <location>
        <position position="127"/>
    </location>
</feature>
<feature type="mutagenesis site" description="Reduced binding affinity for siRNA." evidence="5">
    <original>Q</original>
    <variation>A</variation>
    <location>
        <position position="137"/>
    </location>
</feature>
<feature type="mutagenesis site" description="Reduced binding affinity for siRNA." evidence="5">
    <original>K</original>
    <variation>A</variation>
    <location>
        <position position="163"/>
    </location>
</feature>
<feature type="mutagenesis site" description="No longer dimerizes." evidence="7">
    <location>
        <begin position="296"/>
        <end position="303"/>
    </location>
</feature>
<feature type="mutagenesis site" description="Reduced binding to siRNA." evidence="3">
    <original>L</original>
    <variation>LG</variation>
    <location>
        <position position="427"/>
    </location>
</feature>
<feature type="strand" evidence="23">
    <location>
        <begin position="3"/>
        <end position="6"/>
    </location>
</feature>
<feature type="strand" evidence="26">
    <location>
        <begin position="12"/>
        <end position="14"/>
    </location>
</feature>
<feature type="helix" evidence="27">
    <location>
        <begin position="16"/>
        <end position="18"/>
    </location>
</feature>
<feature type="strand" evidence="26">
    <location>
        <begin position="20"/>
        <end position="24"/>
    </location>
</feature>
<feature type="helix" evidence="26">
    <location>
        <begin position="26"/>
        <end position="36"/>
    </location>
</feature>
<feature type="strand" evidence="28">
    <location>
        <begin position="45"/>
        <end position="47"/>
    </location>
</feature>
<feature type="strand" evidence="26">
    <location>
        <begin position="48"/>
        <end position="54"/>
    </location>
</feature>
<feature type="helix" evidence="26">
    <location>
        <begin position="59"/>
        <end position="74"/>
    </location>
</feature>
<feature type="strand" evidence="26">
    <location>
        <begin position="82"/>
        <end position="87"/>
    </location>
</feature>
<feature type="strand" evidence="26">
    <location>
        <begin position="89"/>
        <end position="92"/>
    </location>
</feature>
<feature type="helix" evidence="26">
    <location>
        <begin position="93"/>
        <end position="106"/>
    </location>
</feature>
<feature type="strand" evidence="26">
    <location>
        <begin position="109"/>
        <end position="117"/>
    </location>
</feature>
<feature type="helix" evidence="26">
    <location>
        <begin position="120"/>
        <end position="131"/>
    </location>
</feature>
<feature type="strand" evidence="29">
    <location>
        <begin position="132"/>
        <end position="134"/>
    </location>
</feature>
<feature type="strand" evidence="26">
    <location>
        <begin position="136"/>
        <end position="140"/>
    </location>
</feature>
<feature type="helix" evidence="26">
    <location>
        <begin position="141"/>
        <end position="144"/>
    </location>
</feature>
<feature type="turn" evidence="25">
    <location>
        <begin position="146"/>
        <end position="148"/>
    </location>
</feature>
<feature type="helix" evidence="26">
    <location>
        <begin position="149"/>
        <end position="163"/>
    </location>
</feature>
<feature type="strand" evidence="29">
    <location>
        <begin position="166"/>
        <end position="168"/>
    </location>
</feature>
<feature type="strand" evidence="27">
    <location>
        <begin position="170"/>
        <end position="172"/>
    </location>
</feature>
<feature type="helix" evidence="22">
    <location>
        <begin position="175"/>
        <end position="177"/>
    </location>
</feature>
<feature type="strand" evidence="26">
    <location>
        <begin position="180"/>
        <end position="202"/>
    </location>
</feature>
<feature type="strand" evidence="26">
    <location>
        <begin position="208"/>
        <end position="213"/>
    </location>
</feature>
<feature type="helix" evidence="26">
    <location>
        <begin position="219"/>
        <end position="221"/>
    </location>
</feature>
<feature type="helix" evidence="26">
    <location>
        <begin position="222"/>
        <end position="240"/>
    </location>
</feature>
<feature type="strand" evidence="26">
    <location>
        <begin position="248"/>
        <end position="256"/>
    </location>
</feature>
<feature type="helix" evidence="26">
    <location>
        <begin position="261"/>
        <end position="277"/>
    </location>
</feature>
<feature type="strand" evidence="26">
    <location>
        <begin position="286"/>
        <end position="294"/>
    </location>
</feature>
<feature type="strand" evidence="26">
    <location>
        <begin position="298"/>
        <end position="300"/>
    </location>
</feature>
<feature type="turn" evidence="23">
    <location>
        <begin position="304"/>
        <end position="307"/>
    </location>
</feature>
<feature type="turn" evidence="27">
    <location>
        <begin position="310"/>
        <end position="313"/>
    </location>
</feature>
<feature type="strand" evidence="26">
    <location>
        <begin position="315"/>
        <end position="325"/>
    </location>
</feature>
<feature type="strand" evidence="23">
    <location>
        <begin position="332"/>
        <end position="334"/>
    </location>
</feature>
<feature type="strand" evidence="23">
    <location>
        <begin position="337"/>
        <end position="340"/>
    </location>
</feature>
<feature type="strand" evidence="26">
    <location>
        <begin position="341"/>
        <end position="343"/>
    </location>
</feature>
<feature type="strand" evidence="26">
    <location>
        <begin position="346"/>
        <end position="353"/>
    </location>
</feature>
<feature type="turn" evidence="26">
    <location>
        <begin position="357"/>
        <end position="359"/>
    </location>
</feature>
<feature type="helix" evidence="26">
    <location>
        <begin position="360"/>
        <end position="374"/>
    </location>
</feature>
<feature type="strand" evidence="26">
    <location>
        <begin position="381"/>
        <end position="383"/>
    </location>
</feature>
<feature type="helix" evidence="26">
    <location>
        <begin position="389"/>
        <end position="406"/>
    </location>
</feature>
<feature type="turn" evidence="24">
    <location>
        <begin position="414"/>
        <end position="416"/>
    </location>
</feature>
<feature type="helix" evidence="26">
    <location>
        <begin position="418"/>
        <end position="422"/>
    </location>
</feature>
<sequence>MMEYKIVENGLTYRIGNGASVPISNTGELIKGLRNYGPYEVPSLKYNQIALIHNNQFSSLINQLKSQISSKIDEVWHIHNINISEFIYDSPHFDSIKSQVDNAIDTGVDGIMLVLPEYNTPLYYKLKSYLINSIPSQFMRYDILSNRNLTFYVDNLLVQFVSKLGGKPWILNVDPEKGSDIIIGTGATRIDNVNLFCFAMVFKKDGTMLWNEISPIVTSSEYLTYLKSTIKKVVYGFKKSNPDWDVEKLTLHVSGKRPKMKDGETKILKETVEELKKQEMVSRDVKYAILHLNETHPFWVMGDPNNRFHPYEGTKVKLSSKRYLLTLLQPYLKRNGLEMVTPIKPLSVEIVSDNWTSEEYYHNVHEILDEIYYLSKMNWRGFRSRNLPVTVNYPKLVAGIIANVNRYGGYPINPEGNRSLQTNPWFL</sequence>
<comment type="function">
    <text evidence="1 5 6">Might play a role in defense against invading genetic elements, using short nucleic acid sequences as guides to bind complementary target strands, resulting in slicing of the target nucleic acid (By similarity). Binds nucleic acids with decreasing affinity in the following order; ssDNA, ssRNA, dsDNA, RNA-DNA, RNA-RNA (PubMed:15800629). Association of the 5' seed region of the guide strand (nucleotides 2-7) with AfPiwi increases affinity for the corresponding target strand; the greatest increase in affinity is for guide DNA with target RNA (PubMed:19187762).</text>
</comment>
<comment type="cofactor">
    <cofactor evidence="4 5 6">
        <name>a divalent metal cation</name>
        <dbReference type="ChEBI" id="CHEBI:60240"/>
    </cofactor>
    <text evidence="4 5 6">Other ligands are provided by nucleic acid (PubMed:15800628, PubMed:15800629, PubMed:19187762).</text>
</comment>
<comment type="subunit">
    <text evidence="7">Homodimer probably stabilized by DNA. Each subunit is capable of interacting with a DNA molecule.</text>
</comment>
<comment type="miscellaneous">
    <text evidence="11">This is missing the N-terminal and PAZ domains compared to other prokaryotic argonaute proteins.</text>
</comment>
<comment type="similarity">
    <text evidence="11">Belongs to the argonaute family. Short pAgo subfamily.</text>
</comment>
<reference key="1">
    <citation type="journal article" date="1997" name="Nature">
        <title>The complete genome sequence of the hyperthermophilic, sulphate-reducing archaeon Archaeoglobus fulgidus.</title>
        <authorList>
            <person name="Klenk H.-P."/>
            <person name="Clayton R.A."/>
            <person name="Tomb J.-F."/>
            <person name="White O."/>
            <person name="Nelson K.E."/>
            <person name="Ketchum K.A."/>
            <person name="Dodson R.J."/>
            <person name="Gwinn M.L."/>
            <person name="Hickey E.K."/>
            <person name="Peterson J.D."/>
            <person name="Richardson D.L."/>
            <person name="Kerlavage A.R."/>
            <person name="Graham D.E."/>
            <person name="Kyrpides N.C."/>
            <person name="Fleischmann R.D."/>
            <person name="Quackenbush J."/>
            <person name="Lee N.H."/>
            <person name="Sutton G.G."/>
            <person name="Gill S.R."/>
            <person name="Kirkness E.F."/>
            <person name="Dougherty B.A."/>
            <person name="McKenney K."/>
            <person name="Adams M.D."/>
            <person name="Loftus B.J."/>
            <person name="Peterson S.N."/>
            <person name="Reich C.I."/>
            <person name="McNeil L.K."/>
            <person name="Badger J.H."/>
            <person name="Glodek A."/>
            <person name="Zhou L."/>
            <person name="Overbeek R."/>
            <person name="Gocayne J.D."/>
            <person name="Weidman J.F."/>
            <person name="McDonald L.A."/>
            <person name="Utterback T.R."/>
            <person name="Cotton M.D."/>
            <person name="Spriggs T."/>
            <person name="Artiach P."/>
            <person name="Kaine B.P."/>
            <person name="Sykes S.M."/>
            <person name="Sadow P.W."/>
            <person name="D'Andrea K.P."/>
            <person name="Bowman C."/>
            <person name="Fujii C."/>
            <person name="Garland S.A."/>
            <person name="Mason T.M."/>
            <person name="Olsen G.J."/>
            <person name="Fraser C.M."/>
            <person name="Smith H.O."/>
            <person name="Woese C.R."/>
            <person name="Venter J.C."/>
        </authorList>
    </citation>
    <scope>NUCLEOTIDE SEQUENCE [LARGE SCALE GENOMIC DNA]</scope>
    <source>
        <strain>ATCC 49558 / DSM 4304 / JCM 9628 / NBRC 100126 / VC-16</strain>
    </source>
</reference>
<reference key="2">
    <citation type="journal article" date="2021" name="Sci. Rep.">
        <title>Prokaryotic Argonaute from Archaeoglobus fulgidus interacts with DNA as a homodimer.</title>
        <authorList>
            <person name="Golovinas E."/>
            <person name="Rutkauskas D."/>
            <person name="Manakova E."/>
            <person name="Jankunec M."/>
            <person name="Silanskas A."/>
            <person name="Sasnauskas G."/>
            <person name="Zaremba M."/>
        </authorList>
    </citation>
    <scope>SUBUNIT</scope>
    <scope>DOMAIN</scope>
    <scope>MUTAGENESIS OF 296-HIS--ASP-303</scope>
</reference>
<reference evidence="14" key="3">
    <citation type="journal article" date="2004" name="EMBO J.">
        <title>Crystal structure of a PIWI protein suggests mechanisms for siRNA recognition and slicer activity.</title>
        <authorList>
            <person name="Parker J.S."/>
            <person name="Roe S.M."/>
            <person name="Barford D."/>
        </authorList>
    </citation>
    <scope>X-RAY CRYSTALLOGRAPHY (1.95 ANGSTROMS)</scope>
    <scope>RNA-BINDING</scope>
    <scope>MUTAGENESIS OF LEU-427</scope>
    <source>
        <strain>ATCC 49558 / DSM 4304 / JCM 9628 / NBRC 100126 / VC-16</strain>
    </source>
</reference>
<reference evidence="16" key="4">
    <citation type="journal article" date="2005" name="Nature">
        <title>Structural insights into mRNA recognition from a PIWI domain-siRNA guide complex.</title>
        <authorList>
            <person name="Parker J.S."/>
            <person name="Roe S.M."/>
            <person name="Barford D."/>
        </authorList>
    </citation>
    <scope>X-RAY CRYSTALLOGRAPHY (2.2 ANGSTROMS) IN A COMPLEX WITH DSRNA DUPLEX AND METAL</scope>
    <scope>COFACTOR</scope>
    <scope>RNA-BINDING</scope>
    <source>
        <strain>ATCC 49558 / DSM 4304 / JCM 9628 / NBRC 100126 / VC-16</strain>
    </source>
</reference>
<reference evidence="15" key="5">
    <citation type="journal article" date="2005" name="Nature">
        <title>Structural basis for 5'-end-specific recognition of guide RNA by the A. fulgidus Piwi protein.</title>
        <authorList>
            <person name="Ma J.-B."/>
            <person name="Yuan Y.-R."/>
            <person name="Meister G."/>
            <person name="Pei Y."/>
            <person name="Tuschl T."/>
            <person name="Patel D.J."/>
        </authorList>
    </citation>
    <scope>X-RAY CRYSTALLOGRAPHY (2.5 ANGSTROMS) IN A COMPLEX WITH DSRNA DUPLEX AND METAL</scope>
    <scope>COFACTOR</scope>
    <scope>DNA-BINDING</scope>
    <scope>RNA-BINDING</scope>
    <scope>MUTAGENESIS OF TYR-123; LYS-127; GLN-137 AND LYS-163</scope>
    <source>
        <strain>ATCC 49558 / DSM 4304 / JCM 9628 / NBRC 100126 / VC-16</strain>
    </source>
</reference>
<reference evidence="17" key="6">
    <citation type="journal article" date="2009" name="Mol. Cell">
        <title>Enhancement of the seed-target recognition step in RNA silencing by a PIWI/MID domain protein.</title>
        <authorList>
            <person name="Parker J.S."/>
            <person name="Parizotto E.A."/>
            <person name="Wang M."/>
            <person name="Roe S.M."/>
            <person name="Barford D."/>
        </authorList>
    </citation>
    <scope>X-RAY CRYSTALLOGRAPHY (1.90 ANGSTROMS) IN COMPLEX WITH DUPLEX DNA AND METAL</scope>
    <scope>COFACTOR</scope>
    <scope>DOMAIN</scope>
    <scope>DNA-BINDING</scope>
    <scope>RNA-BINDING</scope>
    <source>
        <strain>ATCC 49558 / DSM 4304 / JCM 9628 / NBRC 100126 / VC-16</strain>
    </source>
</reference>
<reference evidence="18" key="7">
    <citation type="submission" date="2019-10" db="PDB data bank">
        <title>Crystal structure of Archaeoglobus fulgidus Argonaute protein with cognate DNA oligoduplex 5'-pATTGTGGCCACAAT.</title>
        <authorList>
            <person name="Golovinas E."/>
            <person name="Manakova E."/>
            <person name="Sasnauskas G."/>
            <person name="Zaremba M."/>
        </authorList>
    </citation>
    <scope>X-RAY CRYSTALLOGRAPHY (1.70 ANGSTROMS)</scope>
</reference>
<reference evidence="19" key="8">
    <citation type="submission" date="2020-01" db="PDB data bank">
        <title>Crystal structure of Archaeoglobus fulgidus Argonaute protein with cognate DNA oligoduplex 5'-pATTGTACGTACAAT.</title>
        <authorList>
            <person name="Golovinas E."/>
            <person name="Manakova E."/>
            <person name="Sasnauskas G."/>
            <person name="Zaremba M."/>
        </authorList>
    </citation>
    <scope>X-RAY CRYSTALLOGRAPHY (1.80 ANGSTROMS)</scope>
</reference>
<reference evidence="20 21" key="9">
    <citation type="submission" date="2020-01" db="PDB data bank">
        <title>Archaeoglobus fulgidus Argonaute protein with DNA oligoduplex 5'-pATCGTGGCCACGAT.</title>
        <authorList>
            <person name="Golovinas E."/>
            <person name="Manakova E."/>
            <person name="Sasnauskas G."/>
            <person name="Zaremba M."/>
        </authorList>
    </citation>
    <scope>X-RAY CRYSTALLOGRAPHY (1.90 ANGSTROMS)</scope>
</reference>
<organism>
    <name type="scientific">Archaeoglobus fulgidus (strain ATCC 49558 / DSM 4304 / JCM 9628 / NBRC 100126 / VC-16)</name>
    <dbReference type="NCBI Taxonomy" id="224325"/>
    <lineage>
        <taxon>Archaea</taxon>
        <taxon>Methanobacteriati</taxon>
        <taxon>Methanobacteriota</taxon>
        <taxon>Archaeoglobi</taxon>
        <taxon>Archaeoglobales</taxon>
        <taxon>Archaeoglobaceae</taxon>
        <taxon>Archaeoglobus</taxon>
    </lineage>
</organism>
<name>PIWI_ARCFU</name>